<name>RL3_SYNJB</name>
<keyword id="KW-1185">Reference proteome</keyword>
<keyword id="KW-0687">Ribonucleoprotein</keyword>
<keyword id="KW-0689">Ribosomal protein</keyword>
<keyword id="KW-0694">RNA-binding</keyword>
<keyword id="KW-0699">rRNA-binding</keyword>
<evidence type="ECO:0000255" key="1">
    <source>
        <dbReference type="HAMAP-Rule" id="MF_01325"/>
    </source>
</evidence>
<evidence type="ECO:0000256" key="2">
    <source>
        <dbReference type="SAM" id="MobiDB-lite"/>
    </source>
</evidence>
<evidence type="ECO:0000305" key="3"/>
<organism>
    <name type="scientific">Synechococcus sp. (strain JA-2-3B'a(2-13))</name>
    <name type="common">Cyanobacteria bacterium Yellowstone B-Prime</name>
    <dbReference type="NCBI Taxonomy" id="321332"/>
    <lineage>
        <taxon>Bacteria</taxon>
        <taxon>Bacillati</taxon>
        <taxon>Cyanobacteriota</taxon>
        <taxon>Cyanophyceae</taxon>
        <taxon>Synechococcales</taxon>
        <taxon>Synechococcaceae</taxon>
        <taxon>Synechococcus</taxon>
    </lineage>
</organism>
<comment type="function">
    <text evidence="1">One of the primary rRNA binding proteins, it binds directly near the 3'-end of the 23S rRNA, where it nucleates assembly of the 50S subunit.</text>
</comment>
<comment type="subunit">
    <text evidence="1">Part of the 50S ribosomal subunit. Forms a cluster with proteins L14 and L19.</text>
</comment>
<comment type="similarity">
    <text evidence="1">Belongs to the universal ribosomal protein uL3 family.</text>
</comment>
<dbReference type="EMBL" id="CP000240">
    <property type="protein sequence ID" value="ABD03527.1"/>
    <property type="molecule type" value="Genomic_DNA"/>
</dbReference>
<dbReference type="RefSeq" id="WP_011434152.1">
    <property type="nucleotide sequence ID" value="NC_007776.1"/>
</dbReference>
<dbReference type="SMR" id="Q2JIM7"/>
<dbReference type="STRING" id="321332.CYB_2597"/>
<dbReference type="KEGG" id="cyb:CYB_2597"/>
<dbReference type="eggNOG" id="COG0087">
    <property type="taxonomic scope" value="Bacteria"/>
</dbReference>
<dbReference type="HOGENOM" id="CLU_044142_4_1_3"/>
<dbReference type="OrthoDB" id="9806135at2"/>
<dbReference type="Proteomes" id="UP000001938">
    <property type="component" value="Chromosome"/>
</dbReference>
<dbReference type="GO" id="GO:0022625">
    <property type="term" value="C:cytosolic large ribosomal subunit"/>
    <property type="evidence" value="ECO:0007669"/>
    <property type="project" value="TreeGrafter"/>
</dbReference>
<dbReference type="GO" id="GO:0019843">
    <property type="term" value="F:rRNA binding"/>
    <property type="evidence" value="ECO:0007669"/>
    <property type="project" value="UniProtKB-UniRule"/>
</dbReference>
<dbReference type="GO" id="GO:0003735">
    <property type="term" value="F:structural constituent of ribosome"/>
    <property type="evidence" value="ECO:0007669"/>
    <property type="project" value="InterPro"/>
</dbReference>
<dbReference type="GO" id="GO:0006412">
    <property type="term" value="P:translation"/>
    <property type="evidence" value="ECO:0007669"/>
    <property type="project" value="UniProtKB-UniRule"/>
</dbReference>
<dbReference type="FunFam" id="3.30.160.810:FF:000001">
    <property type="entry name" value="50S ribosomal protein L3"/>
    <property type="match status" value="1"/>
</dbReference>
<dbReference type="FunFam" id="2.40.30.10:FF:000065">
    <property type="entry name" value="50S ribosomal protein L3, chloroplastic"/>
    <property type="match status" value="1"/>
</dbReference>
<dbReference type="Gene3D" id="3.30.160.810">
    <property type="match status" value="1"/>
</dbReference>
<dbReference type="Gene3D" id="2.40.30.10">
    <property type="entry name" value="Translation factors"/>
    <property type="match status" value="1"/>
</dbReference>
<dbReference type="HAMAP" id="MF_01325_B">
    <property type="entry name" value="Ribosomal_uL3_B"/>
    <property type="match status" value="1"/>
</dbReference>
<dbReference type="InterPro" id="IPR000597">
    <property type="entry name" value="Ribosomal_uL3"/>
</dbReference>
<dbReference type="InterPro" id="IPR019927">
    <property type="entry name" value="Ribosomal_uL3_bac/org-type"/>
</dbReference>
<dbReference type="InterPro" id="IPR019926">
    <property type="entry name" value="Ribosomal_uL3_CS"/>
</dbReference>
<dbReference type="InterPro" id="IPR009000">
    <property type="entry name" value="Transl_B-barrel_sf"/>
</dbReference>
<dbReference type="NCBIfam" id="TIGR03625">
    <property type="entry name" value="L3_bact"/>
    <property type="match status" value="1"/>
</dbReference>
<dbReference type="PANTHER" id="PTHR11229">
    <property type="entry name" value="50S RIBOSOMAL PROTEIN L3"/>
    <property type="match status" value="1"/>
</dbReference>
<dbReference type="PANTHER" id="PTHR11229:SF16">
    <property type="entry name" value="LARGE RIBOSOMAL SUBUNIT PROTEIN UL3C"/>
    <property type="match status" value="1"/>
</dbReference>
<dbReference type="Pfam" id="PF00297">
    <property type="entry name" value="Ribosomal_L3"/>
    <property type="match status" value="1"/>
</dbReference>
<dbReference type="SUPFAM" id="SSF50447">
    <property type="entry name" value="Translation proteins"/>
    <property type="match status" value="1"/>
</dbReference>
<dbReference type="PROSITE" id="PS00474">
    <property type="entry name" value="RIBOSOMAL_L3"/>
    <property type="match status" value="1"/>
</dbReference>
<feature type="chain" id="PRO_0000241423" description="Large ribosomal subunit protein uL3">
    <location>
        <begin position="1"/>
        <end position="214"/>
    </location>
</feature>
<feature type="region of interest" description="Disordered" evidence="2">
    <location>
        <begin position="129"/>
        <end position="157"/>
    </location>
</feature>
<accession>Q2JIM7</accession>
<gene>
    <name evidence="1" type="primary">rplC</name>
    <name evidence="1" type="synonym">rpl3</name>
    <name type="ordered locus">CYB_2597</name>
</gene>
<sequence length="214" mass="22993">MALGILGRKVGMTQIFSPEGLAIPVTVVQAGPCTVTQIKTQATDGYNAIQLGYLPTAEKHLTRAQRGHLTKAGVTELLRHLREFRVDQPEAYQLGQKITVEMFSPGQLVDVAGTSIGRGFAGYQKRHHFGRGPMSHGSKNHRRPGSIGAGTTPGRVFPGMRMAGRLGGGRVTTRKLQLVQVDPERDLLVIKGCVPGVEGGLLEITPAKQVGNKR</sequence>
<reference key="1">
    <citation type="journal article" date="2007" name="ISME J.">
        <title>Population level functional diversity in a microbial community revealed by comparative genomic and metagenomic analyses.</title>
        <authorList>
            <person name="Bhaya D."/>
            <person name="Grossman A.R."/>
            <person name="Steunou A.-S."/>
            <person name="Khuri N."/>
            <person name="Cohan F.M."/>
            <person name="Hamamura N."/>
            <person name="Melendrez M.C."/>
            <person name="Bateson M.M."/>
            <person name="Ward D.M."/>
            <person name="Heidelberg J.F."/>
        </authorList>
    </citation>
    <scope>NUCLEOTIDE SEQUENCE [LARGE SCALE GENOMIC DNA]</scope>
    <source>
        <strain>JA-2-3B'a(2-13)</strain>
    </source>
</reference>
<protein>
    <recommendedName>
        <fullName evidence="1">Large ribosomal subunit protein uL3</fullName>
    </recommendedName>
    <alternativeName>
        <fullName evidence="3">50S ribosomal protein L3</fullName>
    </alternativeName>
</protein>
<proteinExistence type="inferred from homology"/>